<reference key="1">
    <citation type="journal article" date="2004" name="Proc. Natl. Acad. Sci. U.S.A.">
        <title>Genomic analysis of Bacteroides fragilis reveals extensive DNA inversions regulating cell surface adaptation.</title>
        <authorList>
            <person name="Kuwahara T."/>
            <person name="Yamashita A."/>
            <person name="Hirakawa H."/>
            <person name="Nakayama H."/>
            <person name="Toh H."/>
            <person name="Okada N."/>
            <person name="Kuhara S."/>
            <person name="Hattori M."/>
            <person name="Hayashi T."/>
            <person name="Ohnishi Y."/>
        </authorList>
    </citation>
    <scope>NUCLEOTIDE SEQUENCE [LARGE SCALE GENOMIC DNA]</scope>
    <source>
        <strain>YCH46</strain>
    </source>
</reference>
<gene>
    <name evidence="1" type="primary">miaA1</name>
    <name type="ordered locus">BF0903</name>
</gene>
<dbReference type="EC" id="2.5.1.75" evidence="1"/>
<dbReference type="EMBL" id="AP006841">
    <property type="protein sequence ID" value="BAD47654.1"/>
    <property type="molecule type" value="Genomic_DNA"/>
</dbReference>
<dbReference type="RefSeq" id="YP_098188.1">
    <property type="nucleotide sequence ID" value="NC_006347.1"/>
</dbReference>
<dbReference type="SMR" id="Q64XX2"/>
<dbReference type="STRING" id="295405.BF0903"/>
<dbReference type="KEGG" id="bfr:BF0903"/>
<dbReference type="PATRIC" id="fig|295405.11.peg.906"/>
<dbReference type="HOGENOM" id="CLU_032616_0_1_10"/>
<dbReference type="OrthoDB" id="9776390at2"/>
<dbReference type="Proteomes" id="UP000002197">
    <property type="component" value="Chromosome"/>
</dbReference>
<dbReference type="GO" id="GO:0005524">
    <property type="term" value="F:ATP binding"/>
    <property type="evidence" value="ECO:0007669"/>
    <property type="project" value="UniProtKB-UniRule"/>
</dbReference>
<dbReference type="GO" id="GO:0052381">
    <property type="term" value="F:tRNA dimethylallyltransferase activity"/>
    <property type="evidence" value="ECO:0007669"/>
    <property type="project" value="UniProtKB-UniRule"/>
</dbReference>
<dbReference type="GO" id="GO:0006400">
    <property type="term" value="P:tRNA modification"/>
    <property type="evidence" value="ECO:0007669"/>
    <property type="project" value="TreeGrafter"/>
</dbReference>
<dbReference type="Gene3D" id="1.10.20.140">
    <property type="match status" value="1"/>
</dbReference>
<dbReference type="Gene3D" id="3.40.50.300">
    <property type="entry name" value="P-loop containing nucleotide triphosphate hydrolases"/>
    <property type="match status" value="1"/>
</dbReference>
<dbReference type="HAMAP" id="MF_00185">
    <property type="entry name" value="IPP_trans"/>
    <property type="match status" value="1"/>
</dbReference>
<dbReference type="InterPro" id="IPR039657">
    <property type="entry name" value="Dimethylallyltransferase"/>
</dbReference>
<dbReference type="InterPro" id="IPR018022">
    <property type="entry name" value="IPT"/>
</dbReference>
<dbReference type="InterPro" id="IPR027417">
    <property type="entry name" value="P-loop_NTPase"/>
</dbReference>
<dbReference type="NCBIfam" id="TIGR00174">
    <property type="entry name" value="miaA"/>
    <property type="match status" value="1"/>
</dbReference>
<dbReference type="PANTHER" id="PTHR11088">
    <property type="entry name" value="TRNA DIMETHYLALLYLTRANSFERASE"/>
    <property type="match status" value="1"/>
</dbReference>
<dbReference type="PANTHER" id="PTHR11088:SF60">
    <property type="entry name" value="TRNA DIMETHYLALLYLTRANSFERASE"/>
    <property type="match status" value="1"/>
</dbReference>
<dbReference type="Pfam" id="PF01715">
    <property type="entry name" value="IPPT"/>
    <property type="match status" value="1"/>
</dbReference>
<dbReference type="SUPFAM" id="SSF52540">
    <property type="entry name" value="P-loop containing nucleoside triphosphate hydrolases"/>
    <property type="match status" value="2"/>
</dbReference>
<evidence type="ECO:0000255" key="1">
    <source>
        <dbReference type="HAMAP-Rule" id="MF_00185"/>
    </source>
</evidence>
<accession>Q64XX2</accession>
<keyword id="KW-0067">ATP-binding</keyword>
<keyword id="KW-0460">Magnesium</keyword>
<keyword id="KW-0547">Nucleotide-binding</keyword>
<keyword id="KW-0808">Transferase</keyword>
<keyword id="KW-0819">tRNA processing</keyword>
<sequence length="301" mass="35152">MTAKTLIVLIGPTGVGKTELSLRIAEYFKTSIISSDSRQLYAELKIGTAAPTPEQLKRVPHYFVGTLQLTDYYSAAQYETEVMSVLEQLFQQHHVVLLTGGSMMYVDAICKGIDDIPTVDAETRELLLHKYDTEGLDNLCAELKLLDPEYYKIVDLKNPKRVIHALEICYMTGKTYTSFRTQQKKERPFHILKIGLTRDRAELYDRINRRVDQMMNEGLLEEARSVYAHRELNSLNTVGYKEIFKYLDGEWDLDFAIEKIKQNSRIYSRKQMTWFKRDEEIRWFHPEQEKEILSYLQASIK</sequence>
<proteinExistence type="inferred from homology"/>
<feature type="chain" id="PRO_0000163872" description="tRNA dimethylallyltransferase 1">
    <location>
        <begin position="1"/>
        <end position="301"/>
    </location>
</feature>
<feature type="region of interest" description="Interaction with substrate tRNA" evidence="1">
    <location>
        <begin position="36"/>
        <end position="39"/>
    </location>
</feature>
<feature type="binding site" evidence="1">
    <location>
        <begin position="11"/>
        <end position="18"/>
    </location>
    <ligand>
        <name>ATP</name>
        <dbReference type="ChEBI" id="CHEBI:30616"/>
    </ligand>
</feature>
<feature type="binding site" evidence="1">
    <location>
        <begin position="13"/>
        <end position="18"/>
    </location>
    <ligand>
        <name>substrate</name>
    </ligand>
</feature>
<feature type="site" description="Interaction with substrate tRNA" evidence="1">
    <location>
        <position position="102"/>
    </location>
</feature>
<feature type="site" description="Interaction with substrate tRNA" evidence="1">
    <location>
        <position position="124"/>
    </location>
</feature>
<organism>
    <name type="scientific">Bacteroides fragilis (strain YCH46)</name>
    <dbReference type="NCBI Taxonomy" id="295405"/>
    <lineage>
        <taxon>Bacteria</taxon>
        <taxon>Pseudomonadati</taxon>
        <taxon>Bacteroidota</taxon>
        <taxon>Bacteroidia</taxon>
        <taxon>Bacteroidales</taxon>
        <taxon>Bacteroidaceae</taxon>
        <taxon>Bacteroides</taxon>
    </lineage>
</organism>
<protein>
    <recommendedName>
        <fullName evidence="1">tRNA dimethylallyltransferase 1</fullName>
        <ecNumber evidence="1">2.5.1.75</ecNumber>
    </recommendedName>
    <alternativeName>
        <fullName evidence="1">Dimethylallyl diphosphate:tRNA dimethylallyltransferase 1</fullName>
        <shortName evidence="1">DMAPP:tRNA dimethylallyltransferase 1</shortName>
        <shortName evidence="1">DMATase 1</shortName>
    </alternativeName>
    <alternativeName>
        <fullName evidence="1">Isopentenyl-diphosphate:tRNA isopentenyltransferase 1</fullName>
        <shortName evidence="1">IPP transferase 1</shortName>
        <shortName evidence="1">IPPT 1</shortName>
        <shortName evidence="1">IPTase 1</shortName>
    </alternativeName>
</protein>
<comment type="function">
    <text evidence="1">Catalyzes the transfer of a dimethylallyl group onto the adenine at position 37 in tRNAs that read codons beginning with uridine, leading to the formation of N6-(dimethylallyl)adenosine (i(6)A).</text>
</comment>
<comment type="catalytic activity">
    <reaction evidence="1">
        <text>adenosine(37) in tRNA + dimethylallyl diphosphate = N(6)-dimethylallyladenosine(37) in tRNA + diphosphate</text>
        <dbReference type="Rhea" id="RHEA:26482"/>
        <dbReference type="Rhea" id="RHEA-COMP:10162"/>
        <dbReference type="Rhea" id="RHEA-COMP:10375"/>
        <dbReference type="ChEBI" id="CHEBI:33019"/>
        <dbReference type="ChEBI" id="CHEBI:57623"/>
        <dbReference type="ChEBI" id="CHEBI:74411"/>
        <dbReference type="ChEBI" id="CHEBI:74415"/>
        <dbReference type="EC" id="2.5.1.75"/>
    </reaction>
</comment>
<comment type="cofactor">
    <cofactor evidence="1">
        <name>Mg(2+)</name>
        <dbReference type="ChEBI" id="CHEBI:18420"/>
    </cofactor>
</comment>
<comment type="subunit">
    <text evidence="1">Monomer.</text>
</comment>
<comment type="similarity">
    <text evidence="1">Belongs to the IPP transferase family.</text>
</comment>
<name>MIAA1_BACFR</name>